<organism>
    <name type="scientific">Mus musculus</name>
    <name type="common">Mouse</name>
    <dbReference type="NCBI Taxonomy" id="10090"/>
    <lineage>
        <taxon>Eukaryota</taxon>
        <taxon>Metazoa</taxon>
        <taxon>Chordata</taxon>
        <taxon>Craniata</taxon>
        <taxon>Vertebrata</taxon>
        <taxon>Euteleostomi</taxon>
        <taxon>Mammalia</taxon>
        <taxon>Eutheria</taxon>
        <taxon>Euarchontoglires</taxon>
        <taxon>Glires</taxon>
        <taxon>Rodentia</taxon>
        <taxon>Myomorpha</taxon>
        <taxon>Muroidea</taxon>
        <taxon>Muridae</taxon>
        <taxon>Murinae</taxon>
        <taxon>Mus</taxon>
        <taxon>Mus</taxon>
    </lineage>
</organism>
<gene>
    <name type="primary">Brms1</name>
</gene>
<dbReference type="EMBL" id="AF233580">
    <property type="protein sequence ID" value="AAK15007.1"/>
    <property type="molecule type" value="mRNA"/>
</dbReference>
<dbReference type="EMBL" id="AF368292">
    <property type="protein sequence ID" value="AAK51553.1"/>
    <property type="molecule type" value="Genomic_DNA"/>
</dbReference>
<dbReference type="EMBL" id="BC016108">
    <property type="protein sequence ID" value="AAH16108.1"/>
    <property type="molecule type" value="mRNA"/>
</dbReference>
<dbReference type="CCDS" id="CCDS50355.1"/>
<dbReference type="RefSeq" id="NP_001360976.1">
    <property type="nucleotide sequence ID" value="NM_001374047.1"/>
</dbReference>
<dbReference type="RefSeq" id="NP_598916.1">
    <property type="nucleotide sequence ID" value="NM_134155.3"/>
</dbReference>
<dbReference type="SMR" id="Q99N20"/>
<dbReference type="BioGRID" id="223258">
    <property type="interactions" value="2"/>
</dbReference>
<dbReference type="ComplexPortal" id="CPX-3441">
    <property type="entry name" value="SIN3A histone deacetylase complex, ES cell-specific variant"/>
</dbReference>
<dbReference type="ComplexPortal" id="CPX-3443">
    <property type="entry name" value="SIN3A histone deacetylase complex"/>
</dbReference>
<dbReference type="ComplexPortal" id="CPX-3444">
    <property type="entry name" value="SIN3B histone deacetylase complex"/>
</dbReference>
<dbReference type="FunCoup" id="Q99N20">
    <property type="interactions" value="2432"/>
</dbReference>
<dbReference type="IntAct" id="Q99N20">
    <property type="interactions" value="2"/>
</dbReference>
<dbReference type="MINT" id="Q99N20"/>
<dbReference type="STRING" id="10090.ENSMUSP00000112266"/>
<dbReference type="iPTMnet" id="Q99N20"/>
<dbReference type="PhosphoSitePlus" id="Q99N20"/>
<dbReference type="jPOST" id="Q99N20"/>
<dbReference type="PaxDb" id="10090-ENSMUSP00000112266"/>
<dbReference type="ProteomicsDB" id="273766"/>
<dbReference type="Antibodypedia" id="4414">
    <property type="antibodies" value="296 antibodies from 32 providers"/>
</dbReference>
<dbReference type="DNASU" id="107392"/>
<dbReference type="Ensembl" id="ENSMUST00000116567.4">
    <property type="protein sequence ID" value="ENSMUSP00000112266.3"/>
    <property type="gene ID" value="ENSMUSG00000080268.5"/>
</dbReference>
<dbReference type="GeneID" id="107392"/>
<dbReference type="KEGG" id="mmu:107392"/>
<dbReference type="UCSC" id="uc008gbz.1">
    <property type="organism name" value="mouse"/>
</dbReference>
<dbReference type="AGR" id="MGI:2388804"/>
<dbReference type="CTD" id="25855"/>
<dbReference type="MGI" id="MGI:2388804">
    <property type="gene designation" value="Brms1"/>
</dbReference>
<dbReference type="VEuPathDB" id="HostDB:ENSMUSG00000080268"/>
<dbReference type="eggNOG" id="KOG4466">
    <property type="taxonomic scope" value="Eukaryota"/>
</dbReference>
<dbReference type="GeneTree" id="ENSGT00940000161779"/>
<dbReference type="HOGENOM" id="CLU_050862_1_0_1"/>
<dbReference type="InParanoid" id="Q99N20"/>
<dbReference type="OMA" id="SEKHMAV"/>
<dbReference type="OrthoDB" id="20886at2759"/>
<dbReference type="PhylomeDB" id="Q99N20"/>
<dbReference type="TreeFam" id="TF323740"/>
<dbReference type="Reactome" id="R-MMU-3214815">
    <property type="pathway name" value="HDACs deacetylate histones"/>
</dbReference>
<dbReference type="BioGRID-ORCS" id="107392">
    <property type="hits" value="8 hits in 77 CRISPR screens"/>
</dbReference>
<dbReference type="ChiTaRS" id="Brms1">
    <property type="organism name" value="mouse"/>
</dbReference>
<dbReference type="PRO" id="PR:Q99N20"/>
<dbReference type="Proteomes" id="UP000000589">
    <property type="component" value="Chromosome 19"/>
</dbReference>
<dbReference type="RNAct" id="Q99N20">
    <property type="molecule type" value="protein"/>
</dbReference>
<dbReference type="Bgee" id="ENSMUSG00000080268">
    <property type="expression patterns" value="Expressed in spermatid and 179 other cell types or tissues"/>
</dbReference>
<dbReference type="ExpressionAtlas" id="Q99N20">
    <property type="expression patterns" value="baseline and differential"/>
</dbReference>
<dbReference type="GO" id="GO:0005737">
    <property type="term" value="C:cytoplasm"/>
    <property type="evidence" value="ECO:0007669"/>
    <property type="project" value="UniProtKB-SubCell"/>
</dbReference>
<dbReference type="GO" id="GO:0005634">
    <property type="term" value="C:nucleus"/>
    <property type="evidence" value="ECO:0000250"/>
    <property type="project" value="UniProtKB"/>
</dbReference>
<dbReference type="GO" id="GO:0070822">
    <property type="term" value="C:Sin3-type complex"/>
    <property type="evidence" value="ECO:0000303"/>
    <property type="project" value="ComplexPortal"/>
</dbReference>
<dbReference type="GO" id="GO:0051059">
    <property type="term" value="F:NF-kappaB binding"/>
    <property type="evidence" value="ECO:0007669"/>
    <property type="project" value="Ensembl"/>
</dbReference>
<dbReference type="GO" id="GO:0006915">
    <property type="term" value="P:apoptotic process"/>
    <property type="evidence" value="ECO:0007669"/>
    <property type="project" value="UniProtKB-KW"/>
</dbReference>
<dbReference type="GO" id="GO:0030336">
    <property type="term" value="P:negative regulation of cell migration"/>
    <property type="evidence" value="ECO:0000303"/>
    <property type="project" value="ComplexPortal"/>
</dbReference>
<dbReference type="GO" id="GO:0045892">
    <property type="term" value="P:negative regulation of DNA-templated transcription"/>
    <property type="evidence" value="ECO:0000250"/>
    <property type="project" value="UniProtKB"/>
</dbReference>
<dbReference type="GO" id="GO:0032088">
    <property type="term" value="P:negative regulation of NF-kappaB transcription factor activity"/>
    <property type="evidence" value="ECO:0000250"/>
    <property type="project" value="UniProtKB"/>
</dbReference>
<dbReference type="GO" id="GO:1902455">
    <property type="term" value="P:negative regulation of stem cell population maintenance"/>
    <property type="evidence" value="ECO:0000303"/>
    <property type="project" value="ComplexPortal"/>
</dbReference>
<dbReference type="GO" id="GO:0000122">
    <property type="term" value="P:negative regulation of transcription by RNA polymerase II"/>
    <property type="evidence" value="ECO:0000303"/>
    <property type="project" value="ComplexPortal"/>
</dbReference>
<dbReference type="GO" id="GO:0030512">
    <property type="term" value="P:negative regulation of transforming growth factor beta receptor signaling pathway"/>
    <property type="evidence" value="ECO:0000303"/>
    <property type="project" value="ComplexPortal"/>
</dbReference>
<dbReference type="GO" id="GO:2000210">
    <property type="term" value="P:positive regulation of anoikis"/>
    <property type="evidence" value="ECO:0000250"/>
    <property type="project" value="UniProtKB"/>
</dbReference>
<dbReference type="GO" id="GO:0090312">
    <property type="term" value="P:positive regulation of protein deacetylation"/>
    <property type="evidence" value="ECO:0000250"/>
    <property type="project" value="UniProtKB"/>
</dbReference>
<dbReference type="GO" id="GO:1902459">
    <property type="term" value="P:positive regulation of stem cell population maintenance"/>
    <property type="evidence" value="ECO:0000303"/>
    <property type="project" value="ComplexPortal"/>
</dbReference>
<dbReference type="FunFam" id="1.20.5.1500:FF:000002">
    <property type="entry name" value="breast cancer metastasis-suppressor 1-like protein-A"/>
    <property type="match status" value="1"/>
</dbReference>
<dbReference type="Gene3D" id="1.20.5.1500">
    <property type="match status" value="1"/>
</dbReference>
<dbReference type="InterPro" id="IPR013907">
    <property type="entry name" value="Sds3"/>
</dbReference>
<dbReference type="PANTHER" id="PTHR21964">
    <property type="entry name" value="BREAST CANCER METASTASIS-SUPPRESSOR 1"/>
    <property type="match status" value="1"/>
</dbReference>
<dbReference type="Pfam" id="PF08598">
    <property type="entry name" value="Sds3"/>
    <property type="match status" value="1"/>
</dbReference>
<dbReference type="SMART" id="SM01401">
    <property type="entry name" value="Sds3"/>
    <property type="match status" value="1"/>
</dbReference>
<keyword id="KW-0053">Apoptosis</keyword>
<keyword id="KW-0175">Coiled coil</keyword>
<keyword id="KW-0963">Cytoplasm</keyword>
<keyword id="KW-1017">Isopeptide bond</keyword>
<keyword id="KW-0539">Nucleus</keyword>
<keyword id="KW-1185">Reference proteome</keyword>
<keyword id="KW-0678">Repressor</keyword>
<keyword id="KW-0804">Transcription</keyword>
<keyword id="KW-0805">Transcription regulation</keyword>
<keyword id="KW-0043">Tumor suppressor</keyword>
<keyword id="KW-0832">Ubl conjugation</keyword>
<evidence type="ECO:0000250" key="1"/>
<evidence type="ECO:0000250" key="2">
    <source>
        <dbReference type="UniProtKB" id="Q5PSV4"/>
    </source>
</evidence>
<evidence type="ECO:0000250" key="3">
    <source>
        <dbReference type="UniProtKB" id="Q9HCU9"/>
    </source>
</evidence>
<evidence type="ECO:0000256" key="4">
    <source>
        <dbReference type="SAM" id="MobiDB-lite"/>
    </source>
</evidence>
<evidence type="ECO:0000305" key="5"/>
<comment type="function">
    <text evidence="1">Transcriptional repressor. Down-regulates transcription activation by NF-kappa-B by promoting the deacetylation of RELA at 'Lys-310'. Promotes HDAC1 binding to promoter regions. Down-regulates expression of anti-apoptotic genes that are controlled by NF-kappa-B. Promotes apoptosis in cells that have inadequate adherence to a substrate, a process called anoikis, and may thereby inhibit metastasis (By similarity).</text>
</comment>
<comment type="subunit">
    <text evidence="1 5">Homohexamer (Potential). Interacts with SNX6, HDAC1 and RELA. Interacts with ARID4A. Identified in mSin3A corepressor complexes together with SIN3A, SIN3B, RBBP4, RBBP7, SAP30, SUDS3, ARID4A, HDAC1 and HDAC2. Interacts with SPOP; this recruits the protein to a ubiquitin ligase complex containing SPOP and CUL3 (By similarity).</text>
</comment>
<comment type="subcellular location">
    <subcellularLocation>
        <location evidence="1">Nucleus</location>
    </subcellularLocation>
    <subcellularLocation>
        <location evidence="1">Cytoplasm</location>
    </subcellularLocation>
    <text evidence="1">Predominantly nuclear.</text>
</comment>
<comment type="domain">
    <text evidence="1">Contains an N-terminal anti-parallel coiled coil formed by two BRMS1 chains; this region can form homohexamers.</text>
</comment>
<comment type="PTM">
    <text evidence="1">Ubiquitinated by a cullin-RING-based BCR (BTB-CUL3-RBX1) E3 ubiquitin-protein ligase complex containing SPOP, leading to proteasomal degradation.</text>
</comment>
<comment type="similarity">
    <text evidence="5">Belongs to the BRMS1 family.</text>
</comment>
<feature type="chain" id="PRO_0000064989" description="Breast cancer metastasis-suppressor 1 homolog">
    <location>
        <begin position="1"/>
        <end position="246"/>
    </location>
</feature>
<feature type="region of interest" description="Disordered" evidence="4">
    <location>
        <begin position="1"/>
        <end position="57"/>
    </location>
</feature>
<feature type="coiled-coil region" evidence="1">
    <location>
        <begin position="51"/>
        <end position="98"/>
    </location>
</feature>
<feature type="compositionally biased region" description="Acidic residues" evidence="4">
    <location>
        <begin position="11"/>
        <end position="32"/>
    </location>
</feature>
<feature type="compositionally biased region" description="Acidic residues" evidence="4">
    <location>
        <begin position="40"/>
        <end position="52"/>
    </location>
</feature>
<feature type="cross-link" description="Glycyl lysine isopeptide (Lys-Gly) (interchain with G-Cter in SUMO2)" evidence="3">
    <location>
        <position position="184"/>
    </location>
</feature>
<feature type="cross-link" description="Glycyl lysine isopeptide (Lys-Gly) (interchain with G-Cter in SUMO2)" evidence="2">
    <location>
        <position position="242"/>
    </location>
</feature>
<proteinExistence type="evidence at transcript level"/>
<reference key="1">
    <citation type="submission" date="2000-02" db="EMBL/GenBank/DDBJ databases">
        <title>Brms1: murine homolog of human breast metastasis suppressor gene-1 (BRMS1).</title>
        <authorList>
            <person name="Samant R.S."/>
            <person name="Debies M.T."/>
            <person name="Welch D.R."/>
        </authorList>
    </citation>
    <scope>NUCLEOTIDE SEQUENCE [MRNA]</scope>
    <source>
        <strain>BALB/cJ</strain>
    </source>
</reference>
<reference key="2">
    <citation type="journal article" date="2002" name="Int. J. Cancer">
        <title>Identification and characterization of the murine ortholog (brms1) of breast-cancer metastasis suppressor 1 (BRMS1).</title>
        <authorList>
            <person name="Samant R.S."/>
            <person name="Debies M.T."/>
            <person name="Shevde L.A."/>
            <person name="Verderame M.F."/>
            <person name="Welch D.R."/>
        </authorList>
    </citation>
    <scope>NUCLEOTIDE SEQUENCE [GENOMIC DNA]</scope>
    <source>
        <strain>129/Sv</strain>
    </source>
</reference>
<reference key="3">
    <citation type="journal article" date="2004" name="Genome Res.">
        <title>The status, quality, and expansion of the NIH full-length cDNA project: the Mammalian Gene Collection (MGC).</title>
        <authorList>
            <consortium name="The MGC Project Team"/>
        </authorList>
    </citation>
    <scope>NUCLEOTIDE SEQUENCE [LARGE SCALE MRNA]</scope>
    <source>
        <strain>FVB/N</strain>
        <tissue>Salivary gland</tissue>
    </source>
</reference>
<protein>
    <recommendedName>
        <fullName>Breast cancer metastasis-suppressor 1 homolog</fullName>
    </recommendedName>
</protein>
<name>BRMS1_MOUSE</name>
<sequence length="246" mass="28210">MPIQPSGKETEEMEAEGDSAAEMNGEADESEEERSGSQTESEEESSEMDDEDYERRRSECVSEMLDLEKQFSELKEKLFRERLSQLRLRLEEVGAERAPEYTEPLGGLQQSLKIRIQVAGIYKGFCLDVIRNKYECELQGAKQHLESEKMLLYDTLLGELQERIQRLEEDRQSLDISSEWWDDKLHSRSSSKAGDAMPPSKRKKAPLVSGPYIVYMLQEIDILEDWTAIKKARAAVSPQKRKADGP</sequence>
<accession>Q99N20</accession>